<accession>C6DIK5</accession>
<gene>
    <name evidence="1" type="primary">aroQ</name>
    <name type="ordered locus">PC1_0245</name>
</gene>
<sequence length="150" mass="16453">MAEKFHILLLNGPNLNLLGTREPDKYGKTTLADIVSELETQAQALNVKFSHLQSNAEHVLIDTIHQARGNTDFILINPAAFTHTSVALRDALLAVSIPFIEIHLSNVHAREPFRHHSYLSDVAVGVICGLGADGYQYALQTAVKRLSTSN</sequence>
<proteinExistence type="inferred from homology"/>
<protein>
    <recommendedName>
        <fullName evidence="1">3-dehydroquinate dehydratase</fullName>
        <shortName evidence="1">3-dehydroquinase</shortName>
        <ecNumber evidence="1">4.2.1.10</ecNumber>
    </recommendedName>
    <alternativeName>
        <fullName evidence="1">Type II DHQase</fullName>
    </alternativeName>
</protein>
<organism>
    <name type="scientific">Pectobacterium carotovorum subsp. carotovorum (strain PC1)</name>
    <dbReference type="NCBI Taxonomy" id="561230"/>
    <lineage>
        <taxon>Bacteria</taxon>
        <taxon>Pseudomonadati</taxon>
        <taxon>Pseudomonadota</taxon>
        <taxon>Gammaproteobacteria</taxon>
        <taxon>Enterobacterales</taxon>
        <taxon>Pectobacteriaceae</taxon>
        <taxon>Pectobacterium</taxon>
    </lineage>
</organism>
<evidence type="ECO:0000255" key="1">
    <source>
        <dbReference type="HAMAP-Rule" id="MF_00169"/>
    </source>
</evidence>
<reference key="1">
    <citation type="submission" date="2009-07" db="EMBL/GenBank/DDBJ databases">
        <title>Complete sequence of Pectobacterium carotovorum subsp. carotovorum PC1.</title>
        <authorList>
            <consortium name="US DOE Joint Genome Institute"/>
            <person name="Lucas S."/>
            <person name="Copeland A."/>
            <person name="Lapidus A."/>
            <person name="Glavina del Rio T."/>
            <person name="Tice H."/>
            <person name="Bruce D."/>
            <person name="Goodwin L."/>
            <person name="Pitluck S."/>
            <person name="Munk A.C."/>
            <person name="Brettin T."/>
            <person name="Detter J.C."/>
            <person name="Han C."/>
            <person name="Tapia R."/>
            <person name="Larimer F."/>
            <person name="Land M."/>
            <person name="Hauser L."/>
            <person name="Kyrpides N."/>
            <person name="Mikhailova N."/>
            <person name="Balakrishnan V."/>
            <person name="Glasner J."/>
            <person name="Perna N.T."/>
        </authorList>
    </citation>
    <scope>NUCLEOTIDE SEQUENCE [LARGE SCALE GENOMIC DNA]</scope>
    <source>
        <strain>PC1</strain>
    </source>
</reference>
<comment type="function">
    <text evidence="1">Catalyzes a trans-dehydration via an enolate intermediate.</text>
</comment>
<comment type="catalytic activity">
    <reaction evidence="1">
        <text>3-dehydroquinate = 3-dehydroshikimate + H2O</text>
        <dbReference type="Rhea" id="RHEA:21096"/>
        <dbReference type="ChEBI" id="CHEBI:15377"/>
        <dbReference type="ChEBI" id="CHEBI:16630"/>
        <dbReference type="ChEBI" id="CHEBI:32364"/>
        <dbReference type="EC" id="4.2.1.10"/>
    </reaction>
</comment>
<comment type="pathway">
    <text evidence="1">Metabolic intermediate biosynthesis; chorismate biosynthesis; chorismate from D-erythrose 4-phosphate and phosphoenolpyruvate: step 3/7.</text>
</comment>
<comment type="subunit">
    <text evidence="1">Homododecamer.</text>
</comment>
<comment type="similarity">
    <text evidence="1">Belongs to the type-II 3-dehydroquinase family.</text>
</comment>
<keyword id="KW-0028">Amino-acid biosynthesis</keyword>
<keyword id="KW-0057">Aromatic amino acid biosynthesis</keyword>
<keyword id="KW-0456">Lyase</keyword>
<feature type="chain" id="PRO_1000203677" description="3-dehydroquinate dehydratase">
    <location>
        <begin position="1"/>
        <end position="150"/>
    </location>
</feature>
<feature type="active site" description="Proton acceptor" evidence="1">
    <location>
        <position position="26"/>
    </location>
</feature>
<feature type="active site" description="Proton donor" evidence="1">
    <location>
        <position position="103"/>
    </location>
</feature>
<feature type="binding site" evidence="1">
    <location>
        <position position="77"/>
    </location>
    <ligand>
        <name>substrate</name>
    </ligand>
</feature>
<feature type="binding site" evidence="1">
    <location>
        <position position="83"/>
    </location>
    <ligand>
        <name>substrate</name>
    </ligand>
</feature>
<feature type="binding site" evidence="1">
    <location>
        <position position="90"/>
    </location>
    <ligand>
        <name>substrate</name>
    </ligand>
</feature>
<feature type="binding site" evidence="1">
    <location>
        <begin position="104"/>
        <end position="105"/>
    </location>
    <ligand>
        <name>substrate</name>
    </ligand>
</feature>
<feature type="binding site" evidence="1">
    <location>
        <position position="114"/>
    </location>
    <ligand>
        <name>substrate</name>
    </ligand>
</feature>
<feature type="site" description="Transition state stabilizer" evidence="1">
    <location>
        <position position="21"/>
    </location>
</feature>
<name>AROQ_PECCP</name>
<dbReference type="EC" id="4.2.1.10" evidence="1"/>
<dbReference type="EMBL" id="CP001657">
    <property type="protein sequence ID" value="ACT11305.1"/>
    <property type="molecule type" value="Genomic_DNA"/>
</dbReference>
<dbReference type="RefSeq" id="WP_012772970.1">
    <property type="nucleotide sequence ID" value="NC_012917.1"/>
</dbReference>
<dbReference type="SMR" id="C6DIK5"/>
<dbReference type="STRING" id="561230.PC1_0245"/>
<dbReference type="GeneID" id="67795956"/>
<dbReference type="KEGG" id="pct:PC1_0245"/>
<dbReference type="eggNOG" id="COG0757">
    <property type="taxonomic scope" value="Bacteria"/>
</dbReference>
<dbReference type="HOGENOM" id="CLU_090968_1_0_6"/>
<dbReference type="OrthoDB" id="9790793at2"/>
<dbReference type="UniPathway" id="UPA00053">
    <property type="reaction ID" value="UER00086"/>
</dbReference>
<dbReference type="Proteomes" id="UP000002736">
    <property type="component" value="Chromosome"/>
</dbReference>
<dbReference type="GO" id="GO:0003855">
    <property type="term" value="F:3-dehydroquinate dehydratase activity"/>
    <property type="evidence" value="ECO:0007669"/>
    <property type="project" value="UniProtKB-UniRule"/>
</dbReference>
<dbReference type="GO" id="GO:0008652">
    <property type="term" value="P:amino acid biosynthetic process"/>
    <property type="evidence" value="ECO:0007669"/>
    <property type="project" value="UniProtKB-KW"/>
</dbReference>
<dbReference type="GO" id="GO:0009073">
    <property type="term" value="P:aromatic amino acid family biosynthetic process"/>
    <property type="evidence" value="ECO:0007669"/>
    <property type="project" value="UniProtKB-KW"/>
</dbReference>
<dbReference type="GO" id="GO:0009423">
    <property type="term" value="P:chorismate biosynthetic process"/>
    <property type="evidence" value="ECO:0007669"/>
    <property type="project" value="UniProtKB-UniRule"/>
</dbReference>
<dbReference type="GO" id="GO:0019631">
    <property type="term" value="P:quinate catabolic process"/>
    <property type="evidence" value="ECO:0007669"/>
    <property type="project" value="TreeGrafter"/>
</dbReference>
<dbReference type="CDD" id="cd00466">
    <property type="entry name" value="DHQase_II"/>
    <property type="match status" value="1"/>
</dbReference>
<dbReference type="Gene3D" id="3.40.50.9100">
    <property type="entry name" value="Dehydroquinase, class II"/>
    <property type="match status" value="1"/>
</dbReference>
<dbReference type="HAMAP" id="MF_00169">
    <property type="entry name" value="AroQ"/>
    <property type="match status" value="1"/>
</dbReference>
<dbReference type="InterPro" id="IPR001874">
    <property type="entry name" value="DHquinase_II"/>
</dbReference>
<dbReference type="InterPro" id="IPR018509">
    <property type="entry name" value="DHquinase_II_CS"/>
</dbReference>
<dbReference type="InterPro" id="IPR036441">
    <property type="entry name" value="DHquinase_II_sf"/>
</dbReference>
<dbReference type="NCBIfam" id="TIGR01088">
    <property type="entry name" value="aroQ"/>
    <property type="match status" value="1"/>
</dbReference>
<dbReference type="NCBIfam" id="NF003804">
    <property type="entry name" value="PRK05395.1-1"/>
    <property type="match status" value="1"/>
</dbReference>
<dbReference type="NCBIfam" id="NF003805">
    <property type="entry name" value="PRK05395.1-2"/>
    <property type="match status" value="1"/>
</dbReference>
<dbReference type="NCBIfam" id="NF003806">
    <property type="entry name" value="PRK05395.1-3"/>
    <property type="match status" value="1"/>
</dbReference>
<dbReference type="NCBIfam" id="NF003807">
    <property type="entry name" value="PRK05395.1-4"/>
    <property type="match status" value="1"/>
</dbReference>
<dbReference type="PANTHER" id="PTHR21272">
    <property type="entry name" value="CATABOLIC 3-DEHYDROQUINASE"/>
    <property type="match status" value="1"/>
</dbReference>
<dbReference type="PANTHER" id="PTHR21272:SF3">
    <property type="entry name" value="CATABOLIC 3-DEHYDROQUINASE"/>
    <property type="match status" value="1"/>
</dbReference>
<dbReference type="Pfam" id="PF01220">
    <property type="entry name" value="DHquinase_II"/>
    <property type="match status" value="1"/>
</dbReference>
<dbReference type="PIRSF" id="PIRSF001399">
    <property type="entry name" value="DHquinase_II"/>
    <property type="match status" value="1"/>
</dbReference>
<dbReference type="SUPFAM" id="SSF52304">
    <property type="entry name" value="Type II 3-dehydroquinate dehydratase"/>
    <property type="match status" value="1"/>
</dbReference>
<dbReference type="PROSITE" id="PS01029">
    <property type="entry name" value="DEHYDROQUINASE_II"/>
    <property type="match status" value="1"/>
</dbReference>